<name>PDUW_CITK8</name>
<proteinExistence type="inferred from homology"/>
<accession>A8AEL8</accession>
<evidence type="ECO:0000250" key="1">
    <source>
        <dbReference type="UniProtKB" id="B1VB81"/>
    </source>
</evidence>
<evidence type="ECO:0000250" key="2">
    <source>
        <dbReference type="UniProtKB" id="P74879"/>
    </source>
</evidence>
<evidence type="ECO:0000255" key="3">
    <source>
        <dbReference type="HAMAP-Rule" id="MF_01882"/>
    </source>
</evidence>
<evidence type="ECO:0000305" key="4"/>
<organism>
    <name type="scientific">Citrobacter koseri (strain ATCC BAA-895 / CDC 4225-83 / SGSC4696)</name>
    <dbReference type="NCBI Taxonomy" id="290338"/>
    <lineage>
        <taxon>Bacteria</taxon>
        <taxon>Pseudomonadati</taxon>
        <taxon>Pseudomonadota</taxon>
        <taxon>Gammaproteobacteria</taxon>
        <taxon>Enterobacterales</taxon>
        <taxon>Enterobacteriaceae</taxon>
        <taxon>Citrobacter</taxon>
    </lineage>
</organism>
<feature type="chain" id="PRO_0000398196" description="Propionate kinase">
    <location>
        <begin position="1"/>
        <end position="404"/>
    </location>
</feature>
<keyword id="KW-0067">ATP-binding</keyword>
<keyword id="KW-0963">Cytoplasm</keyword>
<keyword id="KW-0418">Kinase</keyword>
<keyword id="KW-0547">Nucleotide-binding</keyword>
<keyword id="KW-1185">Reference proteome</keyword>
<keyword id="KW-0808">Transferase</keyword>
<dbReference type="EC" id="2.7.2.15" evidence="3"/>
<dbReference type="EMBL" id="CP000822">
    <property type="protein sequence ID" value="ABV11931.1"/>
    <property type="status" value="ALT_INIT"/>
    <property type="molecule type" value="Genomic_DNA"/>
</dbReference>
<dbReference type="RefSeq" id="WP_024130206.1">
    <property type="nucleotide sequence ID" value="NC_009792.1"/>
</dbReference>
<dbReference type="SMR" id="A8AEL8"/>
<dbReference type="STRING" id="290338.CKO_00779"/>
<dbReference type="GeneID" id="45134978"/>
<dbReference type="KEGG" id="cko:CKO_00779"/>
<dbReference type="HOGENOM" id="CLU_020352_0_1_6"/>
<dbReference type="OrthoDB" id="9802453at2"/>
<dbReference type="UniPathway" id="UPA00621"/>
<dbReference type="Proteomes" id="UP000008148">
    <property type="component" value="Chromosome"/>
</dbReference>
<dbReference type="GO" id="GO:0005737">
    <property type="term" value="C:cytoplasm"/>
    <property type="evidence" value="ECO:0007669"/>
    <property type="project" value="UniProtKB-SubCell"/>
</dbReference>
<dbReference type="GO" id="GO:0008776">
    <property type="term" value="F:acetate kinase activity"/>
    <property type="evidence" value="ECO:0007669"/>
    <property type="project" value="TreeGrafter"/>
</dbReference>
<dbReference type="GO" id="GO:0005524">
    <property type="term" value="F:ATP binding"/>
    <property type="evidence" value="ECO:0007669"/>
    <property type="project" value="UniProtKB-KW"/>
</dbReference>
<dbReference type="GO" id="GO:0008980">
    <property type="term" value="F:propionate kinase activity"/>
    <property type="evidence" value="ECO:0007669"/>
    <property type="project" value="UniProtKB-UniRule"/>
</dbReference>
<dbReference type="GO" id="GO:0006083">
    <property type="term" value="P:acetate metabolic process"/>
    <property type="evidence" value="ECO:0007669"/>
    <property type="project" value="TreeGrafter"/>
</dbReference>
<dbReference type="GO" id="GO:0051144">
    <property type="term" value="P:propanediol catabolic process"/>
    <property type="evidence" value="ECO:0007669"/>
    <property type="project" value="UniProtKB-UniPathway"/>
</dbReference>
<dbReference type="GO" id="GO:0019543">
    <property type="term" value="P:propionate catabolic process"/>
    <property type="evidence" value="ECO:0007669"/>
    <property type="project" value="InterPro"/>
</dbReference>
<dbReference type="CDD" id="cd24010">
    <property type="entry name" value="ASKHA_NBD_AcK_PK"/>
    <property type="match status" value="1"/>
</dbReference>
<dbReference type="Gene3D" id="3.30.420.40">
    <property type="match status" value="2"/>
</dbReference>
<dbReference type="HAMAP" id="MF_00020">
    <property type="entry name" value="Acetate_kinase"/>
    <property type="match status" value="1"/>
</dbReference>
<dbReference type="HAMAP" id="MF_01882">
    <property type="entry name" value="Propion_kin_subfam2"/>
    <property type="match status" value="1"/>
</dbReference>
<dbReference type="InterPro" id="IPR004372">
    <property type="entry name" value="Ac/propionate_kinase"/>
</dbReference>
<dbReference type="InterPro" id="IPR000890">
    <property type="entry name" value="Aliphatic_acid_kin_short-chain"/>
</dbReference>
<dbReference type="InterPro" id="IPR023865">
    <property type="entry name" value="Aliphatic_acid_kinase_CS"/>
</dbReference>
<dbReference type="InterPro" id="IPR043129">
    <property type="entry name" value="ATPase_NBD"/>
</dbReference>
<dbReference type="InterPro" id="IPR024896">
    <property type="entry name" value="Propionate_kinase_PduW"/>
</dbReference>
<dbReference type="NCBIfam" id="TIGR00016">
    <property type="entry name" value="ackA"/>
    <property type="match status" value="1"/>
</dbReference>
<dbReference type="NCBIfam" id="NF009063">
    <property type="entry name" value="PRK12397.1"/>
    <property type="match status" value="1"/>
</dbReference>
<dbReference type="PANTHER" id="PTHR21060">
    <property type="entry name" value="ACETATE KINASE"/>
    <property type="match status" value="1"/>
</dbReference>
<dbReference type="PANTHER" id="PTHR21060:SF15">
    <property type="entry name" value="ACETATE KINASE-RELATED"/>
    <property type="match status" value="1"/>
</dbReference>
<dbReference type="Pfam" id="PF00871">
    <property type="entry name" value="Acetate_kinase"/>
    <property type="match status" value="1"/>
</dbReference>
<dbReference type="PIRSF" id="PIRSF000722">
    <property type="entry name" value="Acetate_prop_kin"/>
    <property type="match status" value="1"/>
</dbReference>
<dbReference type="PRINTS" id="PR00471">
    <property type="entry name" value="ACETATEKNASE"/>
</dbReference>
<dbReference type="SUPFAM" id="SSF53067">
    <property type="entry name" value="Actin-like ATPase domain"/>
    <property type="match status" value="2"/>
</dbReference>
<dbReference type="PROSITE" id="PS01075">
    <property type="entry name" value="ACETATE_KINASE_1"/>
    <property type="match status" value="1"/>
</dbReference>
<dbReference type="PROSITE" id="PS01076">
    <property type="entry name" value="ACETATE_KINASE_2"/>
    <property type="match status" value="1"/>
</dbReference>
<reference key="1">
    <citation type="submission" date="2007-08" db="EMBL/GenBank/DDBJ databases">
        <authorList>
            <consortium name="The Citrobacter koseri Genome Sequencing Project"/>
            <person name="McClelland M."/>
            <person name="Sanderson E.K."/>
            <person name="Porwollik S."/>
            <person name="Spieth J."/>
            <person name="Clifton W.S."/>
            <person name="Latreille P."/>
            <person name="Courtney L."/>
            <person name="Wang C."/>
            <person name="Pepin K."/>
            <person name="Bhonagiri V."/>
            <person name="Nash W."/>
            <person name="Johnson M."/>
            <person name="Thiruvilangam P."/>
            <person name="Wilson R."/>
        </authorList>
    </citation>
    <scope>NUCLEOTIDE SEQUENCE [LARGE SCALE GENOMIC DNA]</scope>
    <source>
        <strain>ATCC BAA-895 / CDC 4225-83 / SGSC4696</strain>
    </source>
</reference>
<sequence length="404" mass="43961">MSHKIMAINAGSSSLKFQLLAMPQGEMICQGLIERIGMANARVTMKTSAQKWQETAPIADHRESVTLLLDKLLSHHIINTLQDIDGVGHRVAHGGEFFKDSARVTDETLAQIERLAELAPLHNPVNALGIHIFRQLLPSTPSVAVFDTAFHQTLDESAYIYPLPWRYYTELGIRRYGFHGTSHKYVSTALAERLGVPLSALRVICCHLGNGSSICAIKGGQSVNTSMGFTPQSGVMMGTRSGDIDPSILPWIAEREGKTPQQLNYLLNNESGLLGISGVSHDYRDVEQAADGGNRRAALALTLFAERIRATIGSYIMQMGGLDALIFTGGIGENSARARAAVCHNLHFLGLSIDEEKNLRNATFIQAENAVVKVAVINTNEELMIAQDVMRIALSDKVTFGVSA</sequence>
<gene>
    <name evidence="3" type="primary">pduW</name>
    <name type="ordered locus">CKO_00779</name>
</gene>
<comment type="function">
    <text evidence="2">Works with phosphate acetyltransferase (pta) to capture exogenous propionate and regenerate propionyl-CoA during degradation of 1,2-propanediol (1,2-PD).</text>
</comment>
<comment type="catalytic activity">
    <reaction evidence="3">
        <text>propanoate + ATP = propanoyl phosphate + ADP</text>
        <dbReference type="Rhea" id="RHEA:23148"/>
        <dbReference type="ChEBI" id="CHEBI:17272"/>
        <dbReference type="ChEBI" id="CHEBI:30616"/>
        <dbReference type="ChEBI" id="CHEBI:58933"/>
        <dbReference type="ChEBI" id="CHEBI:456216"/>
        <dbReference type="EC" id="2.7.2.15"/>
    </reaction>
</comment>
<comment type="pathway">
    <text evidence="1 4">Polyol metabolism; 1,2-propanediol degradation.</text>
</comment>
<comment type="subcellular location">
    <subcellularLocation>
        <location evidence="3">Cytoplasm</location>
    </subcellularLocation>
</comment>
<comment type="similarity">
    <text evidence="3">Belongs to the acetokinase family. PduW subfamily.</text>
</comment>
<comment type="sequence caution" evidence="4">
    <conflict type="erroneous initiation">
        <sequence resource="EMBL-CDS" id="ABV11931"/>
    </conflict>
    <text>Truncated N-terminus.</text>
</comment>
<protein>
    <recommendedName>
        <fullName evidence="3">Propionate kinase</fullName>
        <ecNumber evidence="3">2.7.2.15</ecNumber>
    </recommendedName>
</protein>